<protein>
    <recommendedName>
        <fullName evidence="1">UDP-N-acetylenolpyruvoylglucosamine reductase</fullName>
        <ecNumber evidence="1">1.3.1.98</ecNumber>
    </recommendedName>
    <alternativeName>
        <fullName evidence="1">UDP-N-acetylmuramate dehydrogenase</fullName>
    </alternativeName>
</protein>
<evidence type="ECO:0000255" key="1">
    <source>
        <dbReference type="HAMAP-Rule" id="MF_00037"/>
    </source>
</evidence>
<dbReference type="EC" id="1.3.1.98" evidence="1"/>
<dbReference type="EMBL" id="CP000388">
    <property type="protein sequence ID" value="ABG42499.1"/>
    <property type="molecule type" value="Genomic_DNA"/>
</dbReference>
<dbReference type="SMR" id="Q15NN9"/>
<dbReference type="STRING" id="342610.Patl_3999"/>
<dbReference type="KEGG" id="pat:Patl_3999"/>
<dbReference type="eggNOG" id="COG0812">
    <property type="taxonomic scope" value="Bacteria"/>
</dbReference>
<dbReference type="HOGENOM" id="CLU_035304_0_0_6"/>
<dbReference type="UniPathway" id="UPA00219"/>
<dbReference type="Proteomes" id="UP000001981">
    <property type="component" value="Chromosome"/>
</dbReference>
<dbReference type="GO" id="GO:0005829">
    <property type="term" value="C:cytosol"/>
    <property type="evidence" value="ECO:0007669"/>
    <property type="project" value="TreeGrafter"/>
</dbReference>
<dbReference type="GO" id="GO:0071949">
    <property type="term" value="F:FAD binding"/>
    <property type="evidence" value="ECO:0007669"/>
    <property type="project" value="InterPro"/>
</dbReference>
<dbReference type="GO" id="GO:0008762">
    <property type="term" value="F:UDP-N-acetylmuramate dehydrogenase activity"/>
    <property type="evidence" value="ECO:0007669"/>
    <property type="project" value="UniProtKB-UniRule"/>
</dbReference>
<dbReference type="GO" id="GO:0051301">
    <property type="term" value="P:cell division"/>
    <property type="evidence" value="ECO:0007669"/>
    <property type="project" value="UniProtKB-KW"/>
</dbReference>
<dbReference type="GO" id="GO:0071555">
    <property type="term" value="P:cell wall organization"/>
    <property type="evidence" value="ECO:0007669"/>
    <property type="project" value="UniProtKB-KW"/>
</dbReference>
<dbReference type="GO" id="GO:0009252">
    <property type="term" value="P:peptidoglycan biosynthetic process"/>
    <property type="evidence" value="ECO:0007669"/>
    <property type="project" value="UniProtKB-UniRule"/>
</dbReference>
<dbReference type="GO" id="GO:0008360">
    <property type="term" value="P:regulation of cell shape"/>
    <property type="evidence" value="ECO:0007669"/>
    <property type="project" value="UniProtKB-KW"/>
</dbReference>
<dbReference type="Gene3D" id="3.30.465.10">
    <property type="match status" value="1"/>
</dbReference>
<dbReference type="Gene3D" id="3.90.78.10">
    <property type="entry name" value="UDP-N-acetylenolpyruvoylglucosamine reductase, C-terminal domain"/>
    <property type="match status" value="1"/>
</dbReference>
<dbReference type="Gene3D" id="3.30.43.10">
    <property type="entry name" value="Uridine Diphospho-n-acetylenolpyruvylglucosamine Reductase, domain 2"/>
    <property type="match status" value="1"/>
</dbReference>
<dbReference type="HAMAP" id="MF_00037">
    <property type="entry name" value="MurB"/>
    <property type="match status" value="1"/>
</dbReference>
<dbReference type="InterPro" id="IPR016166">
    <property type="entry name" value="FAD-bd_PCMH"/>
</dbReference>
<dbReference type="InterPro" id="IPR036318">
    <property type="entry name" value="FAD-bd_PCMH-like_sf"/>
</dbReference>
<dbReference type="InterPro" id="IPR016167">
    <property type="entry name" value="FAD-bd_PCMH_sub1"/>
</dbReference>
<dbReference type="InterPro" id="IPR016169">
    <property type="entry name" value="FAD-bd_PCMH_sub2"/>
</dbReference>
<dbReference type="InterPro" id="IPR003170">
    <property type="entry name" value="MurB"/>
</dbReference>
<dbReference type="InterPro" id="IPR011601">
    <property type="entry name" value="MurB_C"/>
</dbReference>
<dbReference type="InterPro" id="IPR036635">
    <property type="entry name" value="MurB_C_sf"/>
</dbReference>
<dbReference type="InterPro" id="IPR006094">
    <property type="entry name" value="Oxid_FAD_bind_N"/>
</dbReference>
<dbReference type="NCBIfam" id="TIGR00179">
    <property type="entry name" value="murB"/>
    <property type="match status" value="1"/>
</dbReference>
<dbReference type="NCBIfam" id="NF000755">
    <property type="entry name" value="PRK00046.1"/>
    <property type="match status" value="1"/>
</dbReference>
<dbReference type="PANTHER" id="PTHR21071">
    <property type="entry name" value="UDP-N-ACETYLENOLPYRUVOYLGLUCOSAMINE REDUCTASE"/>
    <property type="match status" value="1"/>
</dbReference>
<dbReference type="PANTHER" id="PTHR21071:SF4">
    <property type="entry name" value="UDP-N-ACETYLENOLPYRUVOYLGLUCOSAMINE REDUCTASE"/>
    <property type="match status" value="1"/>
</dbReference>
<dbReference type="Pfam" id="PF01565">
    <property type="entry name" value="FAD_binding_4"/>
    <property type="match status" value="1"/>
</dbReference>
<dbReference type="Pfam" id="PF02873">
    <property type="entry name" value="MurB_C"/>
    <property type="match status" value="1"/>
</dbReference>
<dbReference type="SUPFAM" id="SSF56176">
    <property type="entry name" value="FAD-binding/transporter-associated domain-like"/>
    <property type="match status" value="1"/>
</dbReference>
<dbReference type="SUPFAM" id="SSF56194">
    <property type="entry name" value="Uridine diphospho-N-Acetylenolpyruvylglucosamine reductase, MurB, C-terminal domain"/>
    <property type="match status" value="1"/>
</dbReference>
<dbReference type="PROSITE" id="PS51387">
    <property type="entry name" value="FAD_PCMH"/>
    <property type="match status" value="1"/>
</dbReference>
<reference key="1">
    <citation type="submission" date="2006-06" db="EMBL/GenBank/DDBJ databases">
        <title>Complete sequence of Pseudoalteromonas atlantica T6c.</title>
        <authorList>
            <consortium name="US DOE Joint Genome Institute"/>
            <person name="Copeland A."/>
            <person name="Lucas S."/>
            <person name="Lapidus A."/>
            <person name="Barry K."/>
            <person name="Detter J.C."/>
            <person name="Glavina del Rio T."/>
            <person name="Hammon N."/>
            <person name="Israni S."/>
            <person name="Dalin E."/>
            <person name="Tice H."/>
            <person name="Pitluck S."/>
            <person name="Saunders E."/>
            <person name="Brettin T."/>
            <person name="Bruce D."/>
            <person name="Han C."/>
            <person name="Tapia R."/>
            <person name="Gilna P."/>
            <person name="Schmutz J."/>
            <person name="Larimer F."/>
            <person name="Land M."/>
            <person name="Hauser L."/>
            <person name="Kyrpides N."/>
            <person name="Kim E."/>
            <person name="Karls A.C."/>
            <person name="Bartlett D."/>
            <person name="Higgins B.P."/>
            <person name="Richardson P."/>
        </authorList>
    </citation>
    <scope>NUCLEOTIDE SEQUENCE [LARGE SCALE GENOMIC DNA]</scope>
    <source>
        <strain>T6c / ATCC BAA-1087</strain>
    </source>
</reference>
<name>MURB_PSEA6</name>
<keyword id="KW-0131">Cell cycle</keyword>
<keyword id="KW-0132">Cell division</keyword>
<keyword id="KW-0133">Cell shape</keyword>
<keyword id="KW-0961">Cell wall biogenesis/degradation</keyword>
<keyword id="KW-0963">Cytoplasm</keyword>
<keyword id="KW-0274">FAD</keyword>
<keyword id="KW-0285">Flavoprotein</keyword>
<keyword id="KW-0521">NADP</keyword>
<keyword id="KW-0560">Oxidoreductase</keyword>
<keyword id="KW-0573">Peptidoglycan synthesis</keyword>
<comment type="function">
    <text evidence="1">Cell wall formation.</text>
</comment>
<comment type="catalytic activity">
    <reaction evidence="1">
        <text>UDP-N-acetyl-alpha-D-muramate + NADP(+) = UDP-N-acetyl-3-O-(1-carboxyvinyl)-alpha-D-glucosamine + NADPH + H(+)</text>
        <dbReference type="Rhea" id="RHEA:12248"/>
        <dbReference type="ChEBI" id="CHEBI:15378"/>
        <dbReference type="ChEBI" id="CHEBI:57783"/>
        <dbReference type="ChEBI" id="CHEBI:58349"/>
        <dbReference type="ChEBI" id="CHEBI:68483"/>
        <dbReference type="ChEBI" id="CHEBI:70757"/>
        <dbReference type="EC" id="1.3.1.98"/>
    </reaction>
</comment>
<comment type="cofactor">
    <cofactor evidence="1">
        <name>FAD</name>
        <dbReference type="ChEBI" id="CHEBI:57692"/>
    </cofactor>
</comment>
<comment type="pathway">
    <text evidence="1">Cell wall biogenesis; peptidoglycan biosynthesis.</text>
</comment>
<comment type="subcellular location">
    <subcellularLocation>
        <location evidence="1">Cytoplasm</location>
    </subcellularLocation>
</comment>
<comment type="similarity">
    <text evidence="1">Belongs to the MurB family.</text>
</comment>
<accession>Q15NN9</accession>
<organism>
    <name type="scientific">Pseudoalteromonas atlantica (strain T6c / ATCC BAA-1087)</name>
    <dbReference type="NCBI Taxonomy" id="3042615"/>
    <lineage>
        <taxon>Bacteria</taxon>
        <taxon>Pseudomonadati</taxon>
        <taxon>Pseudomonadota</taxon>
        <taxon>Gammaproteobacteria</taxon>
        <taxon>Alteromonadales</taxon>
        <taxon>Alteromonadaceae</taxon>
        <taxon>Paraglaciecola</taxon>
    </lineage>
</organism>
<feature type="chain" id="PRO_0000332490" description="UDP-N-acetylenolpyruvoylglucosamine reductase">
    <location>
        <begin position="1"/>
        <end position="345"/>
    </location>
</feature>
<feature type="domain" description="FAD-binding PCMH-type" evidence="1">
    <location>
        <begin position="25"/>
        <end position="193"/>
    </location>
</feature>
<feature type="active site" evidence="1">
    <location>
        <position position="169"/>
    </location>
</feature>
<feature type="active site" description="Proton donor" evidence="1">
    <location>
        <position position="237"/>
    </location>
</feature>
<feature type="active site" evidence="1">
    <location>
        <position position="333"/>
    </location>
</feature>
<proteinExistence type="inferred from homology"/>
<sequence length="345" mass="37985">MAKIAQNRQSVVILKSLQQLHTFGLPAHCTDFVSIKSVHSAHTFIAQHQKQPFYLLGQGSNTAFVADYKGTVAEVALKGIGVQENESHYIIKAAAGESWHELVVYCLKHTMYGFENLALIPGTVGAAPIQNIGAYGVEVERFIQSVQYIDLKTNQVHSIAAKDCEFGYRDSIFKHALWQKAMIVGVTFLLPKAWQPVVTYGELAALHAPSAQDIFNKVVEVRQAKLPDPSVLGNAGSFFKNPIISCDNLAALHQQFPSMPFYPLDTRTVKIPAAWLIDQLGFKGQFEGGIRCHPKQALVLTNAEQGTGEQLLSLARRIKNAVAEQFSIDLEHEVQLIGAKGRVLL</sequence>
<gene>
    <name evidence="1" type="primary">murB</name>
    <name type="ordered locus">Patl_3999</name>
</gene>